<protein>
    <recommendedName>
        <fullName>Ubiquitin carboxyl-terminal hydrolase MINDY-1</fullName>
        <ecNumber>3.4.19.12</ecNumber>
    </recommendedName>
    <alternativeName>
        <fullName>Deubiquitinating enzyme MINDY-1</fullName>
    </alternativeName>
    <alternativeName>
        <fullName>Protein FAM63A</fullName>
    </alternativeName>
</protein>
<proteinExistence type="inferred from homology"/>
<organism>
    <name type="scientific">Danio rerio</name>
    <name type="common">Zebrafish</name>
    <name type="synonym">Brachydanio rerio</name>
    <dbReference type="NCBI Taxonomy" id="7955"/>
    <lineage>
        <taxon>Eukaryota</taxon>
        <taxon>Metazoa</taxon>
        <taxon>Chordata</taxon>
        <taxon>Craniata</taxon>
        <taxon>Vertebrata</taxon>
        <taxon>Euteleostomi</taxon>
        <taxon>Actinopterygii</taxon>
        <taxon>Neopterygii</taxon>
        <taxon>Teleostei</taxon>
        <taxon>Ostariophysi</taxon>
        <taxon>Cypriniformes</taxon>
        <taxon>Danionidae</taxon>
        <taxon>Danioninae</taxon>
        <taxon>Danio</taxon>
    </lineage>
</organism>
<accession>A3KQS4</accession>
<gene>
    <name type="primary">mindy1</name>
    <name type="synonym">fam63a</name>
    <name type="ORF">si:ch211-210h11.5</name>
</gene>
<name>MINY1_DANRE</name>
<evidence type="ECO:0000250" key="1">
    <source>
        <dbReference type="UniProtKB" id="Q8N5J2"/>
    </source>
</evidence>
<evidence type="ECO:0000256" key="2">
    <source>
        <dbReference type="SAM" id="MobiDB-lite"/>
    </source>
</evidence>
<evidence type="ECO:0000305" key="3"/>
<keyword id="KW-0378">Hydrolase</keyword>
<keyword id="KW-0645">Protease</keyword>
<keyword id="KW-1185">Reference proteome</keyword>
<keyword id="KW-0788">Thiol protease</keyword>
<keyword id="KW-0833">Ubl conjugation pathway</keyword>
<feature type="chain" id="PRO_0000371435" description="Ubiquitin carboxyl-terminal hydrolase MINDY-1">
    <location>
        <begin position="1"/>
        <end position="520"/>
    </location>
</feature>
<feature type="region of interest" description="Disordered" evidence="2">
    <location>
        <begin position="1"/>
        <end position="155"/>
    </location>
</feature>
<feature type="region of interest" description="Disordered" evidence="2">
    <location>
        <begin position="422"/>
        <end position="441"/>
    </location>
</feature>
<feature type="region of interest" description="Ubiquitin-binding domain (UBD)" evidence="1">
    <location>
        <begin position="441"/>
        <end position="479"/>
    </location>
</feature>
<feature type="region of interest" description="Disordered" evidence="2">
    <location>
        <begin position="467"/>
        <end position="520"/>
    </location>
</feature>
<feature type="compositionally biased region" description="Basic and acidic residues" evidence="2">
    <location>
        <begin position="26"/>
        <end position="37"/>
    </location>
</feature>
<feature type="compositionally biased region" description="Polar residues" evidence="2">
    <location>
        <begin position="43"/>
        <end position="54"/>
    </location>
</feature>
<feature type="compositionally biased region" description="Low complexity" evidence="2">
    <location>
        <begin position="77"/>
        <end position="86"/>
    </location>
</feature>
<feature type="compositionally biased region" description="Polar residues" evidence="2">
    <location>
        <begin position="93"/>
        <end position="112"/>
    </location>
</feature>
<feature type="compositionally biased region" description="Polar residues" evidence="2">
    <location>
        <begin position="132"/>
        <end position="146"/>
    </location>
</feature>
<feature type="compositionally biased region" description="Low complexity" evidence="2">
    <location>
        <begin position="469"/>
        <end position="498"/>
    </location>
</feature>
<feature type="compositionally biased region" description="Basic and acidic residues" evidence="2">
    <location>
        <begin position="511"/>
        <end position="520"/>
    </location>
</feature>
<feature type="active site" description="Nucleophile" evidence="1">
    <location>
        <position position="189"/>
    </location>
</feature>
<feature type="active site" description="Proton acceptor" evidence="1">
    <location>
        <position position="371"/>
    </location>
</feature>
<feature type="site" description="Ubiquitin-binding" evidence="1">
    <location>
        <position position="465"/>
    </location>
</feature>
<feature type="site" description="Ubiquitin-binding" evidence="1">
    <location>
        <begin position="468"/>
        <end position="469"/>
    </location>
</feature>
<feature type="site" description="Ubiquitin-binding" evidence="1">
    <location>
        <position position="472"/>
    </location>
</feature>
<dbReference type="EC" id="3.4.19.12"/>
<dbReference type="EMBL" id="BX927401">
    <property type="protein sequence ID" value="CAM56381.1"/>
    <property type="molecule type" value="Genomic_DNA"/>
</dbReference>
<dbReference type="RefSeq" id="NP_001093481.1">
    <property type="nucleotide sequence ID" value="NM_001100011.1"/>
</dbReference>
<dbReference type="RefSeq" id="XP_005159508.1">
    <property type="nucleotide sequence ID" value="XM_005159451.5"/>
</dbReference>
<dbReference type="SMR" id="A3KQS4"/>
<dbReference type="FunCoup" id="A3KQS4">
    <property type="interactions" value="650"/>
</dbReference>
<dbReference type="STRING" id="7955.ENSDARP00000116319"/>
<dbReference type="PaxDb" id="7955-ENSDARP00000116319"/>
<dbReference type="PeptideAtlas" id="A3KQS4"/>
<dbReference type="Ensembl" id="ENSDART00000136502">
    <property type="protein sequence ID" value="ENSDARP00000117536"/>
    <property type="gene ID" value="ENSDARG00000004866"/>
</dbReference>
<dbReference type="Ensembl" id="ENSDART00000147491">
    <property type="protein sequence ID" value="ENSDARP00000116319"/>
    <property type="gene ID" value="ENSDARG00000004866"/>
</dbReference>
<dbReference type="GeneID" id="563470"/>
<dbReference type="KEGG" id="dre:563470"/>
<dbReference type="AGR" id="ZFIN:ZDB-GENE-070717-2"/>
<dbReference type="CTD" id="55793"/>
<dbReference type="ZFIN" id="ZDB-GENE-070717-2">
    <property type="gene designation" value="mindy1"/>
</dbReference>
<dbReference type="eggNOG" id="KOG2427">
    <property type="taxonomic scope" value="Eukaryota"/>
</dbReference>
<dbReference type="HOGENOM" id="CLU_022566_3_2_1"/>
<dbReference type="InParanoid" id="A3KQS4"/>
<dbReference type="OMA" id="GVEMSIF"/>
<dbReference type="OrthoDB" id="10261212at2759"/>
<dbReference type="PhylomeDB" id="A3KQS4"/>
<dbReference type="TreeFam" id="TF314589"/>
<dbReference type="PRO" id="PR:A3KQS4"/>
<dbReference type="Proteomes" id="UP000000437">
    <property type="component" value="Chromosome 19"/>
</dbReference>
<dbReference type="Bgee" id="ENSDARG00000004866">
    <property type="expression patterns" value="Expressed in spleen and 27 other cell types or tissues"/>
</dbReference>
<dbReference type="GO" id="GO:0016807">
    <property type="term" value="F:cysteine-type carboxypeptidase activity"/>
    <property type="evidence" value="ECO:0000318"/>
    <property type="project" value="GO_Central"/>
</dbReference>
<dbReference type="GO" id="GO:0004843">
    <property type="term" value="F:cysteine-type deubiquitinase activity"/>
    <property type="evidence" value="ECO:0007669"/>
    <property type="project" value="UniProtKB-EC"/>
</dbReference>
<dbReference type="GO" id="GO:1990380">
    <property type="term" value="F:K48-linked deubiquitinase activity"/>
    <property type="evidence" value="ECO:0000318"/>
    <property type="project" value="GO_Central"/>
</dbReference>
<dbReference type="GO" id="GO:0036435">
    <property type="term" value="F:K48-linked polyubiquitin modification-dependent protein binding"/>
    <property type="evidence" value="ECO:0000250"/>
    <property type="project" value="UniProtKB"/>
</dbReference>
<dbReference type="GO" id="GO:0006508">
    <property type="term" value="P:proteolysis"/>
    <property type="evidence" value="ECO:0007669"/>
    <property type="project" value="UniProtKB-KW"/>
</dbReference>
<dbReference type="InterPro" id="IPR007518">
    <property type="entry name" value="MINDY"/>
</dbReference>
<dbReference type="InterPro" id="IPR033979">
    <property type="entry name" value="MINDY_domain"/>
</dbReference>
<dbReference type="PANTHER" id="PTHR18063">
    <property type="entry name" value="NF-E2 INDUCIBLE PROTEIN"/>
    <property type="match status" value="1"/>
</dbReference>
<dbReference type="PANTHER" id="PTHR18063:SF7">
    <property type="entry name" value="UBIQUITIN CARBOXYL-TERMINAL HYDROLASE MINDY-1"/>
    <property type="match status" value="1"/>
</dbReference>
<dbReference type="Pfam" id="PF04424">
    <property type="entry name" value="MINDY_DUB"/>
    <property type="match status" value="1"/>
</dbReference>
<comment type="function">
    <text evidence="1">Hydrolase that can specifically remove 'Lys-48'-linked conjugated ubiquitin from proteins. May play a regulatory role at the level of protein turnover.</text>
</comment>
<comment type="catalytic activity">
    <reaction evidence="1">
        <text>Thiol-dependent hydrolysis of ester, thioester, amide, peptide and isopeptide bonds formed by the C-terminal Gly of ubiquitin (a 76-residue protein attached to proteins as an intracellular targeting signal).</text>
        <dbReference type="EC" id="3.4.19.12"/>
    </reaction>
</comment>
<comment type="similarity">
    <text evidence="3">Belongs to the MINDY deubiquitinase family. FAM63 subfamily.</text>
</comment>
<sequence length="520" mass="57366">MADSCADTVDGEIKGFSEGQQLNITKNEDLEQTKPQKEAIANTEESSACVSQIKQDLAPCKDPPTTTTASLEDDAKATSSASVTSKSQDESEVINSQSYTPSQSEATPSFSMASLEFSEENNGVPPDGPLSSAKSARDGNQVSVQENEGAVAGAMRPAEPTMPAYYFVKWITWKEKKTAVITQSENGPCPLIAIMNILLLRWKVKFPAQTEVVTTEELMAHLGECVLSIKPREKAEGMELNFQQNMSDAMAVLPKLSTGLDVNVRFTGVSDFEYTPECIVFDLLDIPLYHGWLVDPQSPEVVSAVGKLSYNQLVEKIIEFKHSTDSSQVSEGLIAEQFLESTATQLSYHGLCELNTTAKEGELSVFFRNNHFSTMIKHKGHLYLLVTDQGFLQEESVVWESLHNVEGDGNFCDSDFRLCHPSQKPSAAAAQPSTQQQQQMQIDQDYLVAMSLQQEQGEAPGPLSDLELARQLQQEEYQQPQTQQQQQQQPSAGQMRGQATSPQGGQRRREKKEETDCCIL</sequence>
<reference key="1">
    <citation type="journal article" date="2013" name="Nature">
        <title>The zebrafish reference genome sequence and its relationship to the human genome.</title>
        <authorList>
            <person name="Howe K."/>
            <person name="Clark M.D."/>
            <person name="Torroja C.F."/>
            <person name="Torrance J."/>
            <person name="Berthelot C."/>
            <person name="Muffato M."/>
            <person name="Collins J.E."/>
            <person name="Humphray S."/>
            <person name="McLaren K."/>
            <person name="Matthews L."/>
            <person name="McLaren S."/>
            <person name="Sealy I."/>
            <person name="Caccamo M."/>
            <person name="Churcher C."/>
            <person name="Scott C."/>
            <person name="Barrett J.C."/>
            <person name="Koch R."/>
            <person name="Rauch G.J."/>
            <person name="White S."/>
            <person name="Chow W."/>
            <person name="Kilian B."/>
            <person name="Quintais L.T."/>
            <person name="Guerra-Assuncao J.A."/>
            <person name="Zhou Y."/>
            <person name="Gu Y."/>
            <person name="Yen J."/>
            <person name="Vogel J.H."/>
            <person name="Eyre T."/>
            <person name="Redmond S."/>
            <person name="Banerjee R."/>
            <person name="Chi J."/>
            <person name="Fu B."/>
            <person name="Langley E."/>
            <person name="Maguire S.F."/>
            <person name="Laird G.K."/>
            <person name="Lloyd D."/>
            <person name="Kenyon E."/>
            <person name="Donaldson S."/>
            <person name="Sehra H."/>
            <person name="Almeida-King J."/>
            <person name="Loveland J."/>
            <person name="Trevanion S."/>
            <person name="Jones M."/>
            <person name="Quail M."/>
            <person name="Willey D."/>
            <person name="Hunt A."/>
            <person name="Burton J."/>
            <person name="Sims S."/>
            <person name="McLay K."/>
            <person name="Plumb B."/>
            <person name="Davis J."/>
            <person name="Clee C."/>
            <person name="Oliver K."/>
            <person name="Clark R."/>
            <person name="Riddle C."/>
            <person name="Elliot D."/>
            <person name="Threadgold G."/>
            <person name="Harden G."/>
            <person name="Ware D."/>
            <person name="Begum S."/>
            <person name="Mortimore B."/>
            <person name="Kerry G."/>
            <person name="Heath P."/>
            <person name="Phillimore B."/>
            <person name="Tracey A."/>
            <person name="Corby N."/>
            <person name="Dunn M."/>
            <person name="Johnson C."/>
            <person name="Wood J."/>
            <person name="Clark S."/>
            <person name="Pelan S."/>
            <person name="Griffiths G."/>
            <person name="Smith M."/>
            <person name="Glithero R."/>
            <person name="Howden P."/>
            <person name="Barker N."/>
            <person name="Lloyd C."/>
            <person name="Stevens C."/>
            <person name="Harley J."/>
            <person name="Holt K."/>
            <person name="Panagiotidis G."/>
            <person name="Lovell J."/>
            <person name="Beasley H."/>
            <person name="Henderson C."/>
            <person name="Gordon D."/>
            <person name="Auger K."/>
            <person name="Wright D."/>
            <person name="Collins J."/>
            <person name="Raisen C."/>
            <person name="Dyer L."/>
            <person name="Leung K."/>
            <person name="Robertson L."/>
            <person name="Ambridge K."/>
            <person name="Leongamornlert D."/>
            <person name="McGuire S."/>
            <person name="Gilderthorp R."/>
            <person name="Griffiths C."/>
            <person name="Manthravadi D."/>
            <person name="Nichol S."/>
            <person name="Barker G."/>
            <person name="Whitehead S."/>
            <person name="Kay M."/>
            <person name="Brown J."/>
            <person name="Murnane C."/>
            <person name="Gray E."/>
            <person name="Humphries M."/>
            <person name="Sycamore N."/>
            <person name="Barker D."/>
            <person name="Saunders D."/>
            <person name="Wallis J."/>
            <person name="Babbage A."/>
            <person name="Hammond S."/>
            <person name="Mashreghi-Mohammadi M."/>
            <person name="Barr L."/>
            <person name="Martin S."/>
            <person name="Wray P."/>
            <person name="Ellington A."/>
            <person name="Matthews N."/>
            <person name="Ellwood M."/>
            <person name="Woodmansey R."/>
            <person name="Clark G."/>
            <person name="Cooper J."/>
            <person name="Tromans A."/>
            <person name="Grafham D."/>
            <person name="Skuce C."/>
            <person name="Pandian R."/>
            <person name="Andrews R."/>
            <person name="Harrison E."/>
            <person name="Kimberley A."/>
            <person name="Garnett J."/>
            <person name="Fosker N."/>
            <person name="Hall R."/>
            <person name="Garner P."/>
            <person name="Kelly D."/>
            <person name="Bird C."/>
            <person name="Palmer S."/>
            <person name="Gehring I."/>
            <person name="Berger A."/>
            <person name="Dooley C.M."/>
            <person name="Ersan-Urun Z."/>
            <person name="Eser C."/>
            <person name="Geiger H."/>
            <person name="Geisler M."/>
            <person name="Karotki L."/>
            <person name="Kirn A."/>
            <person name="Konantz J."/>
            <person name="Konantz M."/>
            <person name="Oberlander M."/>
            <person name="Rudolph-Geiger S."/>
            <person name="Teucke M."/>
            <person name="Lanz C."/>
            <person name="Raddatz G."/>
            <person name="Osoegawa K."/>
            <person name="Zhu B."/>
            <person name="Rapp A."/>
            <person name="Widaa S."/>
            <person name="Langford C."/>
            <person name="Yang F."/>
            <person name="Schuster S.C."/>
            <person name="Carter N.P."/>
            <person name="Harrow J."/>
            <person name="Ning Z."/>
            <person name="Herrero J."/>
            <person name="Searle S.M."/>
            <person name="Enright A."/>
            <person name="Geisler R."/>
            <person name="Plasterk R.H."/>
            <person name="Lee C."/>
            <person name="Westerfield M."/>
            <person name="de Jong P.J."/>
            <person name="Zon L.I."/>
            <person name="Postlethwait J.H."/>
            <person name="Nusslein-Volhard C."/>
            <person name="Hubbard T.J."/>
            <person name="Roest Crollius H."/>
            <person name="Rogers J."/>
            <person name="Stemple D.L."/>
        </authorList>
    </citation>
    <scope>NUCLEOTIDE SEQUENCE [LARGE SCALE GENOMIC DNA]</scope>
    <source>
        <strain>Tuebingen</strain>
    </source>
</reference>